<keyword id="KW-1185">Reference proteome</keyword>
<sequence>MNSERIIKKYPNRRLYDTEVSRYITLADVRDLVMSGQPFRVLDSANDSDITRSILLQIMLEEETGGQPLFSANMLAQIIRFYGGTLQGTFARYLESSLDLFAKQQQEVTKALTDNPFGTVTRLTQKNVEIWADLQDELMRAAGFPVAPRKKKE</sequence>
<organism>
    <name type="scientific">Allochromatium vinosum (strain ATCC 17899 / DSM 180 / NBRC 103801 / NCIMB 10441 / D)</name>
    <name type="common">Chromatium vinosum</name>
    <dbReference type="NCBI Taxonomy" id="572477"/>
    <lineage>
        <taxon>Bacteria</taxon>
        <taxon>Pseudomonadati</taxon>
        <taxon>Pseudomonadota</taxon>
        <taxon>Gammaproteobacteria</taxon>
        <taxon>Chromatiales</taxon>
        <taxon>Chromatiaceae</taxon>
        <taxon>Allochromatium</taxon>
    </lineage>
</organism>
<gene>
    <name type="ordered locus">Alvin_0064</name>
</gene>
<proteinExistence type="predicted"/>
<feature type="chain" id="PRO_0000066402" description="Uncharacterized protein Alvin_0064">
    <location>
        <begin position="1"/>
        <end position="153"/>
    </location>
</feature>
<reference key="1">
    <citation type="journal article" date="1992" name="Eur. J. Biochem.">
        <title>Cloning and nucleotide sequences of genes relevant for biosynthesis of poly(3-hydroxybutyric acid) in Chromatium vinosum strain D.</title>
        <authorList>
            <person name="Liebergesell M."/>
            <person name="Steinbuechel A."/>
        </authorList>
    </citation>
    <scope>NUCLEOTIDE SEQUENCE [GENOMIC DNA]</scope>
    <source>
        <strain>ATCC 17899 / DSM 180 / NBRC 103801 / NCIMB 10441 / D</strain>
    </source>
</reference>
<reference key="2">
    <citation type="journal article" date="2011" name="Stand. Genomic Sci.">
        <title>Complete genome sequence of Allochromatium vinosum DSM 180(T).</title>
        <authorList>
            <person name="Weissgerber T."/>
            <person name="Zigann R."/>
            <person name="Bruce D."/>
            <person name="Chang Y.J."/>
            <person name="Detter J.C."/>
            <person name="Han C."/>
            <person name="Hauser L."/>
            <person name="Jeffries C.D."/>
            <person name="Land M."/>
            <person name="Munk A.C."/>
            <person name="Tapia R."/>
            <person name="Dahl C."/>
        </authorList>
    </citation>
    <scope>NUCLEOTIDE SEQUENCE [LARGE SCALE GENOMIC DNA]</scope>
    <source>
        <strain>ATCC 17899 / DSM 180 / NBRC 103801 / NCIMB 10441 / D</strain>
    </source>
</reference>
<accession>P45373</accession>
<accession>D3RUY7</accession>
<dbReference type="EMBL" id="L01112">
    <property type="protein sequence ID" value="AAA23323.1"/>
    <property type="molecule type" value="Genomic_DNA"/>
</dbReference>
<dbReference type="EMBL" id="CP001896">
    <property type="protein sequence ID" value="ADC61036.1"/>
    <property type="molecule type" value="Genomic_DNA"/>
</dbReference>
<dbReference type="RefSeq" id="WP_012969312.1">
    <property type="nucleotide sequence ID" value="NC_013851.1"/>
</dbReference>
<dbReference type="STRING" id="572477.Alvin_0064"/>
<dbReference type="KEGG" id="alv:Alvin_0064"/>
<dbReference type="eggNOG" id="COG5394">
    <property type="taxonomic scope" value="Bacteria"/>
</dbReference>
<dbReference type="HOGENOM" id="CLU_089210_3_0_6"/>
<dbReference type="OrthoDB" id="9795345at2"/>
<dbReference type="Proteomes" id="UP000001441">
    <property type="component" value="Chromosome"/>
</dbReference>
<dbReference type="GO" id="GO:0006355">
    <property type="term" value="P:regulation of DNA-templated transcription"/>
    <property type="evidence" value="ECO:0007669"/>
    <property type="project" value="InterPro"/>
</dbReference>
<dbReference type="InterPro" id="IPR012909">
    <property type="entry name" value="PHA_DNA-bd_N"/>
</dbReference>
<dbReference type="InterPro" id="IPR010134">
    <property type="entry name" value="PHA_reg_PhaR"/>
</dbReference>
<dbReference type="InterPro" id="IPR007897">
    <property type="entry name" value="PHB_accumulat"/>
</dbReference>
<dbReference type="NCBIfam" id="TIGR01848">
    <property type="entry name" value="PHA_reg_PhaR"/>
    <property type="match status" value="1"/>
</dbReference>
<dbReference type="Pfam" id="PF05233">
    <property type="entry name" value="PHB_acc"/>
    <property type="match status" value="1"/>
</dbReference>
<dbReference type="Pfam" id="PF07879">
    <property type="entry name" value="PHB_acc_N"/>
    <property type="match status" value="1"/>
</dbReference>
<protein>
    <recommendedName>
        <fullName>Uncharacterized protein Alvin_0064</fullName>
    </recommendedName>
    <alternativeName>
        <fullName>ORF4</fullName>
    </alternativeName>
</protein>
<name>Y064_ALLVD</name>